<proteinExistence type="inferred from homology"/>
<gene>
    <name evidence="1" type="primary">pheS</name>
    <name type="ordered locus">Sbal223_2419</name>
</gene>
<dbReference type="EC" id="6.1.1.20" evidence="1"/>
<dbReference type="EMBL" id="CP001252">
    <property type="protein sequence ID" value="ACK46914.1"/>
    <property type="molecule type" value="Genomic_DNA"/>
</dbReference>
<dbReference type="RefSeq" id="WP_012587819.1">
    <property type="nucleotide sequence ID" value="NC_011663.1"/>
</dbReference>
<dbReference type="SMR" id="B8E7F5"/>
<dbReference type="KEGG" id="sbp:Sbal223_2419"/>
<dbReference type="HOGENOM" id="CLU_025086_0_1_6"/>
<dbReference type="Proteomes" id="UP000002507">
    <property type="component" value="Chromosome"/>
</dbReference>
<dbReference type="GO" id="GO:0005737">
    <property type="term" value="C:cytoplasm"/>
    <property type="evidence" value="ECO:0007669"/>
    <property type="project" value="UniProtKB-SubCell"/>
</dbReference>
<dbReference type="GO" id="GO:0005524">
    <property type="term" value="F:ATP binding"/>
    <property type="evidence" value="ECO:0007669"/>
    <property type="project" value="UniProtKB-UniRule"/>
</dbReference>
<dbReference type="GO" id="GO:0000287">
    <property type="term" value="F:magnesium ion binding"/>
    <property type="evidence" value="ECO:0007669"/>
    <property type="project" value="UniProtKB-UniRule"/>
</dbReference>
<dbReference type="GO" id="GO:0004826">
    <property type="term" value="F:phenylalanine-tRNA ligase activity"/>
    <property type="evidence" value="ECO:0007669"/>
    <property type="project" value="UniProtKB-UniRule"/>
</dbReference>
<dbReference type="GO" id="GO:0000049">
    <property type="term" value="F:tRNA binding"/>
    <property type="evidence" value="ECO:0007669"/>
    <property type="project" value="InterPro"/>
</dbReference>
<dbReference type="GO" id="GO:0006432">
    <property type="term" value="P:phenylalanyl-tRNA aminoacylation"/>
    <property type="evidence" value="ECO:0007669"/>
    <property type="project" value="UniProtKB-UniRule"/>
</dbReference>
<dbReference type="CDD" id="cd00496">
    <property type="entry name" value="PheRS_alpha_core"/>
    <property type="match status" value="1"/>
</dbReference>
<dbReference type="FunFam" id="3.30.930.10:FF:000003">
    <property type="entry name" value="Phenylalanine--tRNA ligase alpha subunit"/>
    <property type="match status" value="1"/>
</dbReference>
<dbReference type="Gene3D" id="3.30.930.10">
    <property type="entry name" value="Bira Bifunctional Protein, Domain 2"/>
    <property type="match status" value="1"/>
</dbReference>
<dbReference type="HAMAP" id="MF_00281">
    <property type="entry name" value="Phe_tRNA_synth_alpha1"/>
    <property type="match status" value="1"/>
</dbReference>
<dbReference type="InterPro" id="IPR006195">
    <property type="entry name" value="aa-tRNA-synth_II"/>
</dbReference>
<dbReference type="InterPro" id="IPR045864">
    <property type="entry name" value="aa-tRNA-synth_II/BPL/LPL"/>
</dbReference>
<dbReference type="InterPro" id="IPR004529">
    <property type="entry name" value="Phe-tRNA-synth_IIc_asu"/>
</dbReference>
<dbReference type="InterPro" id="IPR004188">
    <property type="entry name" value="Phe-tRNA_ligase_II_N"/>
</dbReference>
<dbReference type="InterPro" id="IPR022911">
    <property type="entry name" value="Phe_tRNA_ligase_alpha1_bac"/>
</dbReference>
<dbReference type="InterPro" id="IPR002319">
    <property type="entry name" value="Phenylalanyl-tRNA_Synthase"/>
</dbReference>
<dbReference type="InterPro" id="IPR010978">
    <property type="entry name" value="tRNA-bd_arm"/>
</dbReference>
<dbReference type="NCBIfam" id="TIGR00468">
    <property type="entry name" value="pheS"/>
    <property type="match status" value="1"/>
</dbReference>
<dbReference type="PANTHER" id="PTHR11538:SF41">
    <property type="entry name" value="PHENYLALANINE--TRNA LIGASE, MITOCHONDRIAL"/>
    <property type="match status" value="1"/>
</dbReference>
<dbReference type="PANTHER" id="PTHR11538">
    <property type="entry name" value="PHENYLALANYL-TRNA SYNTHETASE"/>
    <property type="match status" value="1"/>
</dbReference>
<dbReference type="Pfam" id="PF02912">
    <property type="entry name" value="Phe_tRNA-synt_N"/>
    <property type="match status" value="1"/>
</dbReference>
<dbReference type="Pfam" id="PF01409">
    <property type="entry name" value="tRNA-synt_2d"/>
    <property type="match status" value="1"/>
</dbReference>
<dbReference type="SUPFAM" id="SSF55681">
    <property type="entry name" value="Class II aaRS and biotin synthetases"/>
    <property type="match status" value="1"/>
</dbReference>
<dbReference type="SUPFAM" id="SSF46589">
    <property type="entry name" value="tRNA-binding arm"/>
    <property type="match status" value="1"/>
</dbReference>
<dbReference type="PROSITE" id="PS50862">
    <property type="entry name" value="AA_TRNA_LIGASE_II"/>
    <property type="match status" value="1"/>
</dbReference>
<comment type="catalytic activity">
    <reaction evidence="1">
        <text>tRNA(Phe) + L-phenylalanine + ATP = L-phenylalanyl-tRNA(Phe) + AMP + diphosphate + H(+)</text>
        <dbReference type="Rhea" id="RHEA:19413"/>
        <dbReference type="Rhea" id="RHEA-COMP:9668"/>
        <dbReference type="Rhea" id="RHEA-COMP:9699"/>
        <dbReference type="ChEBI" id="CHEBI:15378"/>
        <dbReference type="ChEBI" id="CHEBI:30616"/>
        <dbReference type="ChEBI" id="CHEBI:33019"/>
        <dbReference type="ChEBI" id="CHEBI:58095"/>
        <dbReference type="ChEBI" id="CHEBI:78442"/>
        <dbReference type="ChEBI" id="CHEBI:78531"/>
        <dbReference type="ChEBI" id="CHEBI:456215"/>
        <dbReference type="EC" id="6.1.1.20"/>
    </reaction>
</comment>
<comment type="cofactor">
    <cofactor evidence="1">
        <name>Mg(2+)</name>
        <dbReference type="ChEBI" id="CHEBI:18420"/>
    </cofactor>
    <text evidence="1">Binds 2 magnesium ions per tetramer.</text>
</comment>
<comment type="subunit">
    <text evidence="1">Tetramer of two alpha and two beta subunits.</text>
</comment>
<comment type="subcellular location">
    <subcellularLocation>
        <location evidence="1">Cytoplasm</location>
    </subcellularLocation>
</comment>
<comment type="similarity">
    <text evidence="1">Belongs to the class-II aminoacyl-tRNA synthetase family. Phe-tRNA synthetase alpha subunit type 1 subfamily.</text>
</comment>
<name>SYFA_SHEB2</name>
<accession>B8E7F5</accession>
<reference key="1">
    <citation type="submission" date="2008-12" db="EMBL/GenBank/DDBJ databases">
        <title>Complete sequence of chromosome of Shewanella baltica OS223.</title>
        <authorList>
            <consortium name="US DOE Joint Genome Institute"/>
            <person name="Lucas S."/>
            <person name="Copeland A."/>
            <person name="Lapidus A."/>
            <person name="Glavina del Rio T."/>
            <person name="Dalin E."/>
            <person name="Tice H."/>
            <person name="Bruce D."/>
            <person name="Goodwin L."/>
            <person name="Pitluck S."/>
            <person name="Chertkov O."/>
            <person name="Meincke L."/>
            <person name="Brettin T."/>
            <person name="Detter J.C."/>
            <person name="Han C."/>
            <person name="Kuske C.R."/>
            <person name="Larimer F."/>
            <person name="Land M."/>
            <person name="Hauser L."/>
            <person name="Kyrpides N."/>
            <person name="Ovchinnikova G."/>
            <person name="Brettar I."/>
            <person name="Rodrigues J."/>
            <person name="Konstantinidis K."/>
            <person name="Tiedje J."/>
        </authorList>
    </citation>
    <scope>NUCLEOTIDE SEQUENCE [LARGE SCALE GENOMIC DNA]</scope>
    <source>
        <strain>OS223</strain>
    </source>
</reference>
<keyword id="KW-0030">Aminoacyl-tRNA synthetase</keyword>
<keyword id="KW-0067">ATP-binding</keyword>
<keyword id="KW-0963">Cytoplasm</keyword>
<keyword id="KW-0436">Ligase</keyword>
<keyword id="KW-0460">Magnesium</keyword>
<keyword id="KW-0479">Metal-binding</keyword>
<keyword id="KW-0547">Nucleotide-binding</keyword>
<keyword id="KW-0648">Protein biosynthesis</keyword>
<evidence type="ECO:0000255" key="1">
    <source>
        <dbReference type="HAMAP-Rule" id="MF_00281"/>
    </source>
</evidence>
<feature type="chain" id="PRO_1000199324" description="Phenylalanine--tRNA ligase alpha subunit">
    <location>
        <begin position="1"/>
        <end position="327"/>
    </location>
</feature>
<feature type="binding site" evidence="1">
    <location>
        <position position="252"/>
    </location>
    <ligand>
        <name>Mg(2+)</name>
        <dbReference type="ChEBI" id="CHEBI:18420"/>
        <note>shared with beta subunit</note>
    </ligand>
</feature>
<protein>
    <recommendedName>
        <fullName evidence="1">Phenylalanine--tRNA ligase alpha subunit</fullName>
        <ecNumber evidence="1">6.1.1.20</ecNumber>
    </recommendedName>
    <alternativeName>
        <fullName evidence="1">Phenylalanyl-tRNA synthetase alpha subunit</fullName>
        <shortName evidence="1">PheRS</shortName>
    </alternativeName>
</protein>
<sequence>MQQLTEIVEQALVIIDQASDLKALDDIRVDYLGKKGKITDMMKMMGSLSPEEKPAFGQAVNDAKQAIQQKLTERIDGLKSSELEAKLIAEKIDVTLPGRTQEIGGLHPVTRTIERIETFFGELGFSVKQGPEIEDDFHNFDALNISEHHPARADHDTFYFNPKLMLRTQTSGVQIRTMETEKPPLRIISPGRVYRNDYDQTHTPMFHQVEGLLVDEHVNFAELKGILHDFLRNFFEEDLQVRFRPSYFPFTEPSAEVDVMGKNGKWLEVLGCGMVHPNVLRSVGIDPEKYSGFAFGMGVERLTMLRYGVNDLRSFFENDLRFLKQFK</sequence>
<organism>
    <name type="scientific">Shewanella baltica (strain OS223)</name>
    <dbReference type="NCBI Taxonomy" id="407976"/>
    <lineage>
        <taxon>Bacteria</taxon>
        <taxon>Pseudomonadati</taxon>
        <taxon>Pseudomonadota</taxon>
        <taxon>Gammaproteobacteria</taxon>
        <taxon>Alteromonadales</taxon>
        <taxon>Shewanellaceae</taxon>
        <taxon>Shewanella</taxon>
    </lineage>
</organism>